<feature type="chain" id="PRO_0000082936" description="Methionyl-tRNA formyltransferase">
    <location>
        <begin position="1"/>
        <end position="327"/>
    </location>
</feature>
<feature type="binding site" evidence="1">
    <location>
        <begin position="121"/>
        <end position="124"/>
    </location>
    <ligand>
        <name>(6S)-5,6,7,8-tetrahydrofolate</name>
        <dbReference type="ChEBI" id="CHEBI:57453"/>
    </ligand>
</feature>
<keyword id="KW-0648">Protein biosynthesis</keyword>
<keyword id="KW-1185">Reference proteome</keyword>
<keyword id="KW-0808">Transferase</keyword>
<organism>
    <name type="scientific">Burkholderia mallei (strain ATCC 23344)</name>
    <dbReference type="NCBI Taxonomy" id="243160"/>
    <lineage>
        <taxon>Bacteria</taxon>
        <taxon>Pseudomonadati</taxon>
        <taxon>Pseudomonadota</taxon>
        <taxon>Betaproteobacteria</taxon>
        <taxon>Burkholderiales</taxon>
        <taxon>Burkholderiaceae</taxon>
        <taxon>Burkholderia</taxon>
        <taxon>pseudomallei group</taxon>
    </lineage>
</organism>
<sequence>MTHSLRVIFAGTPEFAAAALAAIHEAGFPVPLVLTQPDRPAGRGMKLQASAVKRYAFERGMAVAQPPSLRRAGKYPAEAVAALDLLHATPHDVMVVAAYGLLLPQEVLELPRHGCINIHASLLPRWRGAAPIHRAIEAGDAETGVTLMQMDAGLDTGAMLHEARVAIAPDDTTATLHDKLAAAGARLIVDALVELERTGALAATPQPADGVTYAEKIGKHEAALDWRKPAAALARQVRAFDPFPGGAGTLDGATLKLWAADAVPGRDDAAPGTIVDIGPDGVVIACGEGALRVTQLQKPGGKRLPAREFLAGAPLAVGQRFAPADAA</sequence>
<reference key="1">
    <citation type="journal article" date="2004" name="Proc. Natl. Acad. Sci. U.S.A.">
        <title>Structural flexibility in the Burkholderia mallei genome.</title>
        <authorList>
            <person name="Nierman W.C."/>
            <person name="DeShazer D."/>
            <person name="Kim H.S."/>
            <person name="Tettelin H."/>
            <person name="Nelson K.E."/>
            <person name="Feldblyum T.V."/>
            <person name="Ulrich R.L."/>
            <person name="Ronning C.M."/>
            <person name="Brinkac L.M."/>
            <person name="Daugherty S.C."/>
            <person name="Davidsen T.D."/>
            <person name="DeBoy R.T."/>
            <person name="Dimitrov G."/>
            <person name="Dodson R.J."/>
            <person name="Durkin A.S."/>
            <person name="Gwinn M.L."/>
            <person name="Haft D.H."/>
            <person name="Khouri H.M."/>
            <person name="Kolonay J.F."/>
            <person name="Madupu R."/>
            <person name="Mohammoud Y."/>
            <person name="Nelson W.C."/>
            <person name="Radune D."/>
            <person name="Romero C.M."/>
            <person name="Sarria S."/>
            <person name="Selengut J."/>
            <person name="Shamblin C."/>
            <person name="Sullivan S.A."/>
            <person name="White O."/>
            <person name="Yu Y."/>
            <person name="Zafar N."/>
            <person name="Zhou L."/>
            <person name="Fraser C.M."/>
        </authorList>
    </citation>
    <scope>NUCLEOTIDE SEQUENCE [LARGE SCALE GENOMIC DNA]</scope>
    <source>
        <strain>ATCC 23344</strain>
    </source>
</reference>
<protein>
    <recommendedName>
        <fullName evidence="1">Methionyl-tRNA formyltransferase</fullName>
        <ecNumber evidence="1">2.1.2.9</ecNumber>
    </recommendedName>
</protein>
<proteinExistence type="inferred from homology"/>
<dbReference type="EC" id="2.1.2.9" evidence="1"/>
<dbReference type="EMBL" id="CP000010">
    <property type="protein sequence ID" value="AAU48966.1"/>
    <property type="molecule type" value="Genomic_DNA"/>
</dbReference>
<dbReference type="RefSeq" id="WP_004200737.1">
    <property type="nucleotide sequence ID" value="NC_006348.1"/>
</dbReference>
<dbReference type="RefSeq" id="YP_101983.1">
    <property type="nucleotide sequence ID" value="NC_006348.1"/>
</dbReference>
<dbReference type="SMR" id="Q62MT4"/>
<dbReference type="GeneID" id="92977923"/>
<dbReference type="KEGG" id="bma:BMA0143"/>
<dbReference type="PATRIC" id="fig|243160.12.peg.142"/>
<dbReference type="eggNOG" id="COG0223">
    <property type="taxonomic scope" value="Bacteria"/>
</dbReference>
<dbReference type="HOGENOM" id="CLU_033347_1_2_4"/>
<dbReference type="Proteomes" id="UP000006693">
    <property type="component" value="Chromosome 1"/>
</dbReference>
<dbReference type="GO" id="GO:0005829">
    <property type="term" value="C:cytosol"/>
    <property type="evidence" value="ECO:0007669"/>
    <property type="project" value="TreeGrafter"/>
</dbReference>
<dbReference type="GO" id="GO:0004479">
    <property type="term" value="F:methionyl-tRNA formyltransferase activity"/>
    <property type="evidence" value="ECO:0007669"/>
    <property type="project" value="UniProtKB-UniRule"/>
</dbReference>
<dbReference type="CDD" id="cd08646">
    <property type="entry name" value="FMT_core_Met-tRNA-FMT_N"/>
    <property type="match status" value="1"/>
</dbReference>
<dbReference type="CDD" id="cd08704">
    <property type="entry name" value="Met_tRNA_FMT_C"/>
    <property type="match status" value="1"/>
</dbReference>
<dbReference type="FunFam" id="3.40.50.12230:FF:000001">
    <property type="entry name" value="Methionyl-tRNA formyltransferase"/>
    <property type="match status" value="1"/>
</dbReference>
<dbReference type="Gene3D" id="3.10.25.10">
    <property type="entry name" value="Formyl transferase, C-terminal domain"/>
    <property type="match status" value="1"/>
</dbReference>
<dbReference type="Gene3D" id="3.40.50.170">
    <property type="entry name" value="Formyl transferase, N-terminal domain"/>
    <property type="match status" value="1"/>
</dbReference>
<dbReference type="HAMAP" id="MF_00182">
    <property type="entry name" value="Formyl_trans"/>
    <property type="match status" value="1"/>
</dbReference>
<dbReference type="InterPro" id="IPR005794">
    <property type="entry name" value="Fmt"/>
</dbReference>
<dbReference type="InterPro" id="IPR005793">
    <property type="entry name" value="Formyl_trans_C"/>
</dbReference>
<dbReference type="InterPro" id="IPR037022">
    <property type="entry name" value="Formyl_trans_C_sf"/>
</dbReference>
<dbReference type="InterPro" id="IPR002376">
    <property type="entry name" value="Formyl_transf_N"/>
</dbReference>
<dbReference type="InterPro" id="IPR036477">
    <property type="entry name" value="Formyl_transf_N_sf"/>
</dbReference>
<dbReference type="InterPro" id="IPR011034">
    <property type="entry name" value="Formyl_transferase-like_C_sf"/>
</dbReference>
<dbReference type="InterPro" id="IPR001555">
    <property type="entry name" value="GART_AS"/>
</dbReference>
<dbReference type="InterPro" id="IPR044135">
    <property type="entry name" value="Met-tRNA-FMT_C"/>
</dbReference>
<dbReference type="InterPro" id="IPR041711">
    <property type="entry name" value="Met-tRNA-FMT_N"/>
</dbReference>
<dbReference type="NCBIfam" id="TIGR00460">
    <property type="entry name" value="fmt"/>
    <property type="match status" value="1"/>
</dbReference>
<dbReference type="PANTHER" id="PTHR11138">
    <property type="entry name" value="METHIONYL-TRNA FORMYLTRANSFERASE"/>
    <property type="match status" value="1"/>
</dbReference>
<dbReference type="PANTHER" id="PTHR11138:SF5">
    <property type="entry name" value="METHIONYL-TRNA FORMYLTRANSFERASE, MITOCHONDRIAL"/>
    <property type="match status" value="1"/>
</dbReference>
<dbReference type="Pfam" id="PF02911">
    <property type="entry name" value="Formyl_trans_C"/>
    <property type="match status" value="1"/>
</dbReference>
<dbReference type="Pfam" id="PF00551">
    <property type="entry name" value="Formyl_trans_N"/>
    <property type="match status" value="1"/>
</dbReference>
<dbReference type="SUPFAM" id="SSF50486">
    <property type="entry name" value="FMT C-terminal domain-like"/>
    <property type="match status" value="1"/>
</dbReference>
<dbReference type="SUPFAM" id="SSF53328">
    <property type="entry name" value="Formyltransferase"/>
    <property type="match status" value="1"/>
</dbReference>
<dbReference type="PROSITE" id="PS00373">
    <property type="entry name" value="GART"/>
    <property type="match status" value="1"/>
</dbReference>
<gene>
    <name evidence="1" type="primary">fmt</name>
    <name type="ordered locus">BMA0143</name>
</gene>
<comment type="function">
    <text evidence="1">Attaches a formyl group to the free amino group of methionyl-tRNA(fMet). The formyl group appears to play a dual role in the initiator identity of N-formylmethionyl-tRNA by promoting its recognition by IF2 and preventing the misappropriation of this tRNA by the elongation apparatus.</text>
</comment>
<comment type="catalytic activity">
    <reaction evidence="1">
        <text>L-methionyl-tRNA(fMet) + (6R)-10-formyltetrahydrofolate = N-formyl-L-methionyl-tRNA(fMet) + (6S)-5,6,7,8-tetrahydrofolate + H(+)</text>
        <dbReference type="Rhea" id="RHEA:24380"/>
        <dbReference type="Rhea" id="RHEA-COMP:9952"/>
        <dbReference type="Rhea" id="RHEA-COMP:9953"/>
        <dbReference type="ChEBI" id="CHEBI:15378"/>
        <dbReference type="ChEBI" id="CHEBI:57453"/>
        <dbReference type="ChEBI" id="CHEBI:78530"/>
        <dbReference type="ChEBI" id="CHEBI:78844"/>
        <dbReference type="ChEBI" id="CHEBI:195366"/>
        <dbReference type="EC" id="2.1.2.9"/>
    </reaction>
</comment>
<comment type="similarity">
    <text evidence="1">Belongs to the Fmt family.</text>
</comment>
<evidence type="ECO:0000255" key="1">
    <source>
        <dbReference type="HAMAP-Rule" id="MF_00182"/>
    </source>
</evidence>
<accession>Q62MT4</accession>
<name>FMT_BURMA</name>